<evidence type="ECO:0000255" key="1">
    <source>
        <dbReference type="HAMAP-Rule" id="MF_03140"/>
    </source>
</evidence>
<evidence type="ECO:0000256" key="2">
    <source>
        <dbReference type="SAM" id="MobiDB-lite"/>
    </source>
</evidence>
<sequence>MGIKHLYQIIQENAPDAVKAGEIKNHFGRKVAIDASMSIYSFLIAVRSDGQQLTSETGETTSHLMGMFYRTLRIVDNGIKPVYVFDGAPPKLKSGELAKRFMRKSEAAEAHEEAKEVGTAEEVEKFSRRTVRVTREHNEECKKLLKLMGVPYIDAPTEAEAQCAVLARAGKVYAAASEDMDTLCFDSPILLRHLTFSEQRKEPILEIHLDRVLEGLDMDRKQFVDLCILLGCDYLDPIPKVGPNTALKLIRDHGSLEQVVEAIKSDPKKKYTIPEDWPYKEARELFFDPDVRKADHPDCDFKWEAPDVEGLVKFLVEEKAFSEDRVRNAAARLQKNLKTAQQSRLEGFFKPIAKTEQEKAVLKRKHEEKLELQKKKKKEDAKAKKEAKSKPRGTT</sequence>
<keyword id="KW-0227">DNA damage</keyword>
<keyword id="KW-0234">DNA repair</keyword>
<keyword id="KW-0235">DNA replication</keyword>
<keyword id="KW-0255">Endonuclease</keyword>
<keyword id="KW-0269">Exonuclease</keyword>
<keyword id="KW-0378">Hydrolase</keyword>
<keyword id="KW-0460">Magnesium</keyword>
<keyword id="KW-0479">Metal-binding</keyword>
<keyword id="KW-0496">Mitochondrion</keyword>
<keyword id="KW-0540">Nuclease</keyword>
<keyword id="KW-0539">Nucleus</keyword>
<keyword id="KW-0597">Phosphoprotein</keyword>
<keyword id="KW-1185">Reference proteome</keyword>
<organism>
    <name type="scientific">Ajellomyces capsulatus (strain NAm1 / WU24)</name>
    <name type="common">Darling's disease fungus</name>
    <name type="synonym">Histoplasma capsulatum</name>
    <dbReference type="NCBI Taxonomy" id="2059318"/>
    <lineage>
        <taxon>Eukaryota</taxon>
        <taxon>Fungi</taxon>
        <taxon>Dikarya</taxon>
        <taxon>Ascomycota</taxon>
        <taxon>Pezizomycotina</taxon>
        <taxon>Eurotiomycetes</taxon>
        <taxon>Eurotiomycetidae</taxon>
        <taxon>Onygenales</taxon>
        <taxon>Ajellomycetaceae</taxon>
        <taxon>Histoplasma</taxon>
    </lineage>
</organism>
<feature type="chain" id="PRO_0000403556" description="Flap endonuclease 1">
    <location>
        <begin position="1"/>
        <end position="395"/>
    </location>
</feature>
<feature type="region of interest" description="N-domain">
    <location>
        <begin position="1"/>
        <end position="104"/>
    </location>
</feature>
<feature type="region of interest" description="I-domain">
    <location>
        <begin position="122"/>
        <end position="253"/>
    </location>
</feature>
<feature type="region of interest" description="Interaction with PCNA" evidence="1">
    <location>
        <begin position="341"/>
        <end position="349"/>
    </location>
</feature>
<feature type="region of interest" description="Disordered" evidence="2">
    <location>
        <begin position="360"/>
        <end position="395"/>
    </location>
</feature>
<feature type="compositionally biased region" description="Basic and acidic residues" evidence="2">
    <location>
        <begin position="360"/>
        <end position="389"/>
    </location>
</feature>
<feature type="binding site" evidence="1">
    <location>
        <position position="34"/>
    </location>
    <ligand>
        <name>Mg(2+)</name>
        <dbReference type="ChEBI" id="CHEBI:18420"/>
        <label>1</label>
    </ligand>
</feature>
<feature type="binding site" evidence="1">
    <location>
        <position position="47"/>
    </location>
    <ligand>
        <name>DNA</name>
        <dbReference type="ChEBI" id="CHEBI:16991"/>
    </ligand>
</feature>
<feature type="binding site" evidence="1">
    <location>
        <position position="70"/>
    </location>
    <ligand>
        <name>DNA</name>
        <dbReference type="ChEBI" id="CHEBI:16991"/>
    </ligand>
</feature>
<feature type="binding site" evidence="1">
    <location>
        <position position="86"/>
    </location>
    <ligand>
        <name>Mg(2+)</name>
        <dbReference type="ChEBI" id="CHEBI:18420"/>
        <label>1</label>
    </ligand>
</feature>
<feature type="binding site" evidence="1">
    <location>
        <position position="158"/>
    </location>
    <ligand>
        <name>DNA</name>
        <dbReference type="ChEBI" id="CHEBI:16991"/>
    </ligand>
</feature>
<feature type="binding site" evidence="1">
    <location>
        <position position="158"/>
    </location>
    <ligand>
        <name>Mg(2+)</name>
        <dbReference type="ChEBI" id="CHEBI:18420"/>
        <label>1</label>
    </ligand>
</feature>
<feature type="binding site" evidence="1">
    <location>
        <position position="160"/>
    </location>
    <ligand>
        <name>Mg(2+)</name>
        <dbReference type="ChEBI" id="CHEBI:18420"/>
        <label>1</label>
    </ligand>
</feature>
<feature type="binding site" evidence="1">
    <location>
        <position position="179"/>
    </location>
    <ligand>
        <name>Mg(2+)</name>
        <dbReference type="ChEBI" id="CHEBI:18420"/>
        <label>2</label>
    </ligand>
</feature>
<feature type="binding site" evidence="1">
    <location>
        <position position="181"/>
    </location>
    <ligand>
        <name>Mg(2+)</name>
        <dbReference type="ChEBI" id="CHEBI:18420"/>
        <label>2</label>
    </ligand>
</feature>
<feature type="binding site" evidence="1">
    <location>
        <position position="231"/>
    </location>
    <ligand>
        <name>DNA</name>
        <dbReference type="ChEBI" id="CHEBI:16991"/>
    </ligand>
</feature>
<feature type="binding site" evidence="1">
    <location>
        <position position="233"/>
    </location>
    <ligand>
        <name>DNA</name>
        <dbReference type="ChEBI" id="CHEBI:16991"/>
    </ligand>
</feature>
<feature type="binding site" evidence="1">
    <location>
        <position position="233"/>
    </location>
    <ligand>
        <name>Mg(2+)</name>
        <dbReference type="ChEBI" id="CHEBI:18420"/>
        <label>2</label>
    </ligand>
</feature>
<dbReference type="EC" id="3.1.-.-" evidence="1"/>
<dbReference type="EMBL" id="CH476655">
    <property type="protein sequence ID" value="EDN03397.1"/>
    <property type="molecule type" value="Genomic_DNA"/>
</dbReference>
<dbReference type="SMR" id="A6QV55"/>
<dbReference type="STRING" id="339724.A6QV55"/>
<dbReference type="KEGG" id="aje:HCAG_01262"/>
<dbReference type="VEuPathDB" id="FungiDB:HCAG_01262"/>
<dbReference type="HOGENOM" id="CLU_032444_1_1_1"/>
<dbReference type="OMA" id="MGIPWVQ"/>
<dbReference type="OrthoDB" id="1105at299071"/>
<dbReference type="Proteomes" id="UP000009297">
    <property type="component" value="Unassembled WGS sequence"/>
</dbReference>
<dbReference type="GO" id="GO:0005739">
    <property type="term" value="C:mitochondrion"/>
    <property type="evidence" value="ECO:0007669"/>
    <property type="project" value="UniProtKB-SubCell"/>
</dbReference>
<dbReference type="GO" id="GO:0005730">
    <property type="term" value="C:nucleolus"/>
    <property type="evidence" value="ECO:0007669"/>
    <property type="project" value="UniProtKB-SubCell"/>
</dbReference>
<dbReference type="GO" id="GO:0005654">
    <property type="term" value="C:nucleoplasm"/>
    <property type="evidence" value="ECO:0007669"/>
    <property type="project" value="UniProtKB-SubCell"/>
</dbReference>
<dbReference type="GO" id="GO:0008409">
    <property type="term" value="F:5'-3' exonuclease activity"/>
    <property type="evidence" value="ECO:0007669"/>
    <property type="project" value="UniProtKB-UniRule"/>
</dbReference>
<dbReference type="GO" id="GO:0017108">
    <property type="term" value="F:5'-flap endonuclease activity"/>
    <property type="evidence" value="ECO:0007669"/>
    <property type="project" value="UniProtKB-UniRule"/>
</dbReference>
<dbReference type="GO" id="GO:0003677">
    <property type="term" value="F:DNA binding"/>
    <property type="evidence" value="ECO:0007669"/>
    <property type="project" value="UniProtKB-UniRule"/>
</dbReference>
<dbReference type="GO" id="GO:0000287">
    <property type="term" value="F:magnesium ion binding"/>
    <property type="evidence" value="ECO:0007669"/>
    <property type="project" value="UniProtKB-UniRule"/>
</dbReference>
<dbReference type="GO" id="GO:0006284">
    <property type="term" value="P:base-excision repair"/>
    <property type="evidence" value="ECO:0007669"/>
    <property type="project" value="UniProtKB-UniRule"/>
</dbReference>
<dbReference type="GO" id="GO:0043137">
    <property type="term" value="P:DNA replication, removal of RNA primer"/>
    <property type="evidence" value="ECO:0007669"/>
    <property type="project" value="UniProtKB-UniRule"/>
</dbReference>
<dbReference type="CDD" id="cd09907">
    <property type="entry name" value="H3TH_FEN1-Euk"/>
    <property type="match status" value="1"/>
</dbReference>
<dbReference type="CDD" id="cd09867">
    <property type="entry name" value="PIN_FEN1"/>
    <property type="match status" value="1"/>
</dbReference>
<dbReference type="FunFam" id="1.10.150.20:FF:000009">
    <property type="entry name" value="Flap endonuclease 1"/>
    <property type="match status" value="1"/>
</dbReference>
<dbReference type="FunFam" id="3.40.50.1010:FF:000003">
    <property type="entry name" value="Flap endonuclease 1"/>
    <property type="match status" value="1"/>
</dbReference>
<dbReference type="Gene3D" id="1.10.150.20">
    <property type="entry name" value="5' to 3' exonuclease, C-terminal subdomain"/>
    <property type="match status" value="1"/>
</dbReference>
<dbReference type="Gene3D" id="3.40.50.1010">
    <property type="entry name" value="5'-nuclease"/>
    <property type="match status" value="1"/>
</dbReference>
<dbReference type="HAMAP" id="MF_00614">
    <property type="entry name" value="Fen"/>
    <property type="match status" value="1"/>
</dbReference>
<dbReference type="InterPro" id="IPR036279">
    <property type="entry name" value="5-3_exonuclease_C_sf"/>
</dbReference>
<dbReference type="InterPro" id="IPR023426">
    <property type="entry name" value="Flap_endonuc"/>
</dbReference>
<dbReference type="InterPro" id="IPR008918">
    <property type="entry name" value="HhH2"/>
</dbReference>
<dbReference type="InterPro" id="IPR029060">
    <property type="entry name" value="PIN-like_dom_sf"/>
</dbReference>
<dbReference type="InterPro" id="IPR006086">
    <property type="entry name" value="XPG-I_dom"/>
</dbReference>
<dbReference type="InterPro" id="IPR006084">
    <property type="entry name" value="XPG/Rad2"/>
</dbReference>
<dbReference type="InterPro" id="IPR019974">
    <property type="entry name" value="XPG_CS"/>
</dbReference>
<dbReference type="InterPro" id="IPR006085">
    <property type="entry name" value="XPG_DNA_repair_N"/>
</dbReference>
<dbReference type="PANTHER" id="PTHR11081:SF9">
    <property type="entry name" value="FLAP ENDONUCLEASE 1"/>
    <property type="match status" value="1"/>
</dbReference>
<dbReference type="PANTHER" id="PTHR11081">
    <property type="entry name" value="FLAP ENDONUCLEASE FAMILY MEMBER"/>
    <property type="match status" value="1"/>
</dbReference>
<dbReference type="Pfam" id="PF00867">
    <property type="entry name" value="XPG_I"/>
    <property type="match status" value="1"/>
</dbReference>
<dbReference type="Pfam" id="PF00752">
    <property type="entry name" value="XPG_N"/>
    <property type="match status" value="1"/>
</dbReference>
<dbReference type="PRINTS" id="PR00853">
    <property type="entry name" value="XPGRADSUPER"/>
</dbReference>
<dbReference type="SMART" id="SM00279">
    <property type="entry name" value="HhH2"/>
    <property type="match status" value="1"/>
</dbReference>
<dbReference type="SMART" id="SM00484">
    <property type="entry name" value="XPGI"/>
    <property type="match status" value="1"/>
</dbReference>
<dbReference type="SMART" id="SM00485">
    <property type="entry name" value="XPGN"/>
    <property type="match status" value="1"/>
</dbReference>
<dbReference type="SUPFAM" id="SSF47807">
    <property type="entry name" value="5' to 3' exonuclease, C-terminal subdomain"/>
    <property type="match status" value="1"/>
</dbReference>
<dbReference type="SUPFAM" id="SSF88723">
    <property type="entry name" value="PIN domain-like"/>
    <property type="match status" value="1"/>
</dbReference>
<dbReference type="PROSITE" id="PS00841">
    <property type="entry name" value="XPG_1"/>
    <property type="match status" value="1"/>
</dbReference>
<dbReference type="PROSITE" id="PS00842">
    <property type="entry name" value="XPG_2"/>
    <property type="match status" value="1"/>
</dbReference>
<reference key="1">
    <citation type="journal article" date="2009" name="Genome Res.">
        <title>Comparative genomic analyses of the human fungal pathogens Coccidioides and their relatives.</title>
        <authorList>
            <person name="Sharpton T.J."/>
            <person name="Stajich J.E."/>
            <person name="Rounsley S.D."/>
            <person name="Gardner M.J."/>
            <person name="Wortman J.R."/>
            <person name="Jordar V.S."/>
            <person name="Maiti R."/>
            <person name="Kodira C.D."/>
            <person name="Neafsey D.E."/>
            <person name="Zeng Q."/>
            <person name="Hung C.-Y."/>
            <person name="McMahan C."/>
            <person name="Muszewska A."/>
            <person name="Grynberg M."/>
            <person name="Mandel M.A."/>
            <person name="Kellner E.M."/>
            <person name="Barker B.M."/>
            <person name="Galgiani J.N."/>
            <person name="Orbach M.J."/>
            <person name="Kirkland T.N."/>
            <person name="Cole G.T."/>
            <person name="Henn M.R."/>
            <person name="Birren B.W."/>
            <person name="Taylor J.W."/>
        </authorList>
    </citation>
    <scope>NUCLEOTIDE SEQUENCE [LARGE SCALE GENOMIC DNA]</scope>
    <source>
        <strain>NAm1 / WU24</strain>
    </source>
</reference>
<protein>
    <recommendedName>
        <fullName evidence="1">Flap endonuclease 1</fullName>
        <shortName evidence="1">FEN-1</shortName>
        <ecNumber evidence="1">3.1.-.-</ecNumber>
    </recommendedName>
    <alternativeName>
        <fullName evidence="1">Flap structure-specific endonuclease 1</fullName>
    </alternativeName>
</protein>
<name>FEN1_AJECN</name>
<comment type="function">
    <text evidence="1">Structure-specific nuclease with 5'-flap endonuclease and 5'-3' exonuclease activities involved in DNA replication and repair. During DNA replication, cleaves the 5'-overhanging flap structure that is generated by displacement synthesis when DNA polymerase encounters the 5'-end of a downstream Okazaki fragment. It enters the flap from the 5'-end and then tracks to cleave the flap base, leaving a nick for ligation. Also involved in the long patch base excision repair (LP-BER) pathway, by cleaving within the apurinic/apyrimidinic (AP) site-terminated flap. Acts as a genome stabilization factor that prevents flaps from equilibrating into structures that lead to duplications and deletions. Also possesses 5'-3' exonuclease activity on nicked or gapped double-stranded DNA, and exhibits RNase H activity. Also involved in replication and repair of rDNA and in repairing mitochondrial DNA.</text>
</comment>
<comment type="cofactor">
    <cofactor evidence="1">
        <name>Mg(2+)</name>
        <dbReference type="ChEBI" id="CHEBI:18420"/>
    </cofactor>
    <text evidence="1">Binds 2 magnesium ions per subunit. They probably participate in the reaction catalyzed by the enzyme. May bind an additional third magnesium ion after substrate binding.</text>
</comment>
<comment type="subunit">
    <text evidence="1">Interacts with PCNA. Three molecules of FEN1 bind to one PCNA trimer with each molecule binding to one PCNA monomer. PCNA stimulates the nuclease activity without altering cleavage specificity.</text>
</comment>
<comment type="subcellular location">
    <subcellularLocation>
        <location evidence="1">Nucleus</location>
        <location evidence="1">Nucleolus</location>
    </subcellularLocation>
    <subcellularLocation>
        <location evidence="1">Nucleus</location>
        <location evidence="1">Nucleoplasm</location>
    </subcellularLocation>
    <subcellularLocation>
        <location evidence="1">Mitochondrion</location>
    </subcellularLocation>
    <text evidence="1">Resides mostly in the nucleoli and relocalizes to the nucleoplasm upon DNA damage.</text>
</comment>
<comment type="PTM">
    <text evidence="1">Phosphorylated. Phosphorylation upon DNA damage induces relocalization to the nuclear plasma.</text>
</comment>
<comment type="similarity">
    <text evidence="1">Belongs to the XPG/RAD2 endonuclease family. FEN1 subfamily.</text>
</comment>
<accession>A6QV55</accession>
<proteinExistence type="inferred from homology"/>
<gene>
    <name evidence="1" type="primary">FEN1</name>
    <name type="ORF">HCAG_01262</name>
</gene>